<organism>
    <name type="scientific">Klebsiella pneumoniae (strain 342)</name>
    <dbReference type="NCBI Taxonomy" id="507522"/>
    <lineage>
        <taxon>Bacteria</taxon>
        <taxon>Pseudomonadati</taxon>
        <taxon>Pseudomonadota</taxon>
        <taxon>Gammaproteobacteria</taxon>
        <taxon>Enterobacterales</taxon>
        <taxon>Enterobacteriaceae</taxon>
        <taxon>Klebsiella/Raoultella group</taxon>
        <taxon>Klebsiella</taxon>
        <taxon>Klebsiella pneumoniae complex</taxon>
    </lineage>
</organism>
<proteinExistence type="inferred from homology"/>
<sequence length="304" mass="32621">MRLPIILDTDPGIDDAAAIAAALFAPELELQLMTTVAGNVSVEKTTRNALQLLHFWNADVPLAQGASMPLVRPLRDAASVHGESGMEGYDFVEHQRQPLAKPAFQAIRDALMHAAEPITLVAIGPLTNIALLLTQYPECVFNIRRLVIMGGSAGRGNFTPNAEFNIAIDPEAAAKVFHSGLEIVMCGLDVTNRALLAADYLATLPTLNQTGKMLHALFSHYRSGSMSSGLRMHDLCAIAWLACPELFTLQPCFVAVETQGTWTAGTTVVDIEGRLGQPANALVALDIDVEGFQRWAAEVIALAP</sequence>
<protein>
    <recommendedName>
        <fullName evidence="1">Non-specific ribonucleoside hydrolase RihC</fullName>
        <ecNumber evidence="1">3.2.-.-</ecNumber>
    </recommendedName>
    <alternativeName>
        <fullName evidence="1">Purine/pyrimidine ribonucleoside hydrolase</fullName>
    </alternativeName>
</protein>
<dbReference type="EC" id="3.2.-.-" evidence="1"/>
<dbReference type="EMBL" id="CP000964">
    <property type="protein sequence ID" value="ACI07119.1"/>
    <property type="molecule type" value="Genomic_DNA"/>
</dbReference>
<dbReference type="SMR" id="B5Y231"/>
<dbReference type="KEGG" id="kpe:KPK_4731"/>
<dbReference type="HOGENOM" id="CLU_036838_2_2_6"/>
<dbReference type="Proteomes" id="UP000001734">
    <property type="component" value="Chromosome"/>
</dbReference>
<dbReference type="GO" id="GO:0005829">
    <property type="term" value="C:cytosol"/>
    <property type="evidence" value="ECO:0007669"/>
    <property type="project" value="TreeGrafter"/>
</dbReference>
<dbReference type="GO" id="GO:0008477">
    <property type="term" value="F:purine nucleosidase activity"/>
    <property type="evidence" value="ECO:0007669"/>
    <property type="project" value="TreeGrafter"/>
</dbReference>
<dbReference type="GO" id="GO:0006144">
    <property type="term" value="P:purine nucleobase metabolic process"/>
    <property type="evidence" value="ECO:0007669"/>
    <property type="project" value="UniProtKB-UniRule"/>
</dbReference>
<dbReference type="GO" id="GO:0006152">
    <property type="term" value="P:purine nucleoside catabolic process"/>
    <property type="evidence" value="ECO:0007669"/>
    <property type="project" value="TreeGrafter"/>
</dbReference>
<dbReference type="GO" id="GO:0006206">
    <property type="term" value="P:pyrimidine nucleobase metabolic process"/>
    <property type="evidence" value="ECO:0007669"/>
    <property type="project" value="UniProtKB-UniRule"/>
</dbReference>
<dbReference type="CDD" id="cd02651">
    <property type="entry name" value="nuc_hydro_IU_UC_XIUA"/>
    <property type="match status" value="1"/>
</dbReference>
<dbReference type="FunFam" id="3.90.245.10:FF:000002">
    <property type="entry name" value="Non-specific ribonucleoside hydrolase RihC"/>
    <property type="match status" value="1"/>
</dbReference>
<dbReference type="Gene3D" id="3.90.245.10">
    <property type="entry name" value="Ribonucleoside hydrolase-like"/>
    <property type="match status" value="1"/>
</dbReference>
<dbReference type="HAMAP" id="MF_01432">
    <property type="entry name" value="Nucleosid_hydro_RihC"/>
    <property type="match status" value="1"/>
</dbReference>
<dbReference type="InterPro" id="IPR001910">
    <property type="entry name" value="Inosine/uridine_hydrolase_dom"/>
</dbReference>
<dbReference type="InterPro" id="IPR023186">
    <property type="entry name" value="IUNH"/>
</dbReference>
<dbReference type="InterPro" id="IPR022976">
    <property type="entry name" value="Nucleosid_hydro_RihC_nonspecif"/>
</dbReference>
<dbReference type="InterPro" id="IPR036452">
    <property type="entry name" value="Ribo_hydro-like"/>
</dbReference>
<dbReference type="NCBIfam" id="NF008036">
    <property type="entry name" value="PRK10768.1"/>
    <property type="match status" value="1"/>
</dbReference>
<dbReference type="PANTHER" id="PTHR12304">
    <property type="entry name" value="INOSINE-URIDINE PREFERRING NUCLEOSIDE HYDROLASE"/>
    <property type="match status" value="1"/>
</dbReference>
<dbReference type="PANTHER" id="PTHR12304:SF15">
    <property type="entry name" value="NON-SPECIFIC RIBONUCLEOSIDE HYDROLASE RIHC"/>
    <property type="match status" value="1"/>
</dbReference>
<dbReference type="Pfam" id="PF01156">
    <property type="entry name" value="IU_nuc_hydro"/>
    <property type="match status" value="1"/>
</dbReference>
<dbReference type="SUPFAM" id="SSF53590">
    <property type="entry name" value="Nucleoside hydrolase"/>
    <property type="match status" value="1"/>
</dbReference>
<reference key="1">
    <citation type="journal article" date="2008" name="PLoS Genet.">
        <title>Complete genome sequence of the N2-fixing broad host range endophyte Klebsiella pneumoniae 342 and virulence predictions verified in mice.</title>
        <authorList>
            <person name="Fouts D.E."/>
            <person name="Tyler H.L."/>
            <person name="DeBoy R.T."/>
            <person name="Daugherty S."/>
            <person name="Ren Q."/>
            <person name="Badger J.H."/>
            <person name="Durkin A.S."/>
            <person name="Huot H."/>
            <person name="Shrivastava S."/>
            <person name="Kothari S."/>
            <person name="Dodson R.J."/>
            <person name="Mohamoud Y."/>
            <person name="Khouri H."/>
            <person name="Roesch L.F.W."/>
            <person name="Krogfelt K.A."/>
            <person name="Struve C."/>
            <person name="Triplett E.W."/>
            <person name="Methe B.A."/>
        </authorList>
    </citation>
    <scope>NUCLEOTIDE SEQUENCE [LARGE SCALE GENOMIC DNA]</scope>
    <source>
        <strain>342</strain>
    </source>
</reference>
<evidence type="ECO:0000255" key="1">
    <source>
        <dbReference type="HAMAP-Rule" id="MF_01432"/>
    </source>
</evidence>
<name>RIHC_KLEP3</name>
<gene>
    <name evidence="1" type="primary">rihC</name>
    <name type="ordered locus">KPK_4731</name>
</gene>
<keyword id="KW-0326">Glycosidase</keyword>
<keyword id="KW-0378">Hydrolase</keyword>
<comment type="function">
    <text evidence="1">Hydrolyzes both purine and pyrimidine ribonucleosides with a broad-substrate specificity.</text>
</comment>
<comment type="similarity">
    <text evidence="1">Belongs to the IUNH family. RihC subfamily.</text>
</comment>
<feature type="chain" id="PRO_1000145817" description="Non-specific ribonucleoside hydrolase RihC">
    <location>
        <begin position="1"/>
        <end position="304"/>
    </location>
</feature>
<feature type="active site" evidence="1">
    <location>
        <position position="233"/>
    </location>
</feature>
<accession>B5Y231</accession>